<name>TPR_RAT</name>
<dbReference type="EMBL" id="AABR06075372">
    <property type="status" value="NOT_ANNOTATED_CDS"/>
    <property type="molecule type" value="Genomic_DNA"/>
</dbReference>
<dbReference type="EMBL" id="BC101883">
    <property type="protein sequence ID" value="AAI01884.1"/>
    <property type="status" value="ALT_SEQ"/>
    <property type="molecule type" value="mRNA"/>
</dbReference>
<dbReference type="SMR" id="F1MA98"/>
<dbReference type="BioGRID" id="258004">
    <property type="interactions" value="1"/>
</dbReference>
<dbReference type="CORUM" id="F1MA98"/>
<dbReference type="FunCoup" id="F1MA98">
    <property type="interactions" value="4276"/>
</dbReference>
<dbReference type="IntAct" id="F1MA98">
    <property type="interactions" value="1"/>
</dbReference>
<dbReference type="MINT" id="F1MA98"/>
<dbReference type="STRING" id="10116.ENSRNOP00000062172"/>
<dbReference type="GlyGen" id="F1MA98">
    <property type="glycosylation" value="3 sites"/>
</dbReference>
<dbReference type="iPTMnet" id="F1MA98"/>
<dbReference type="PhosphoSitePlus" id="F1MA98"/>
<dbReference type="jPOST" id="F1MA98"/>
<dbReference type="PaxDb" id="10116-ENSRNOP00000062172"/>
<dbReference type="UCSC" id="RGD:1310664">
    <property type="organism name" value="rat"/>
</dbReference>
<dbReference type="AGR" id="RGD:1310664"/>
<dbReference type="RGD" id="1310664">
    <property type="gene designation" value="Tpr"/>
</dbReference>
<dbReference type="VEuPathDB" id="HostDB:ENSRNOG00000002394"/>
<dbReference type="eggNOG" id="KOG4674">
    <property type="taxonomic scope" value="Eukaryota"/>
</dbReference>
<dbReference type="HOGENOM" id="CLU_001059_0_0_1"/>
<dbReference type="InParanoid" id="F1MA98"/>
<dbReference type="Reactome" id="R-RNO-159227">
    <property type="pathway name" value="Transport of the SLBP independent Mature mRNA"/>
</dbReference>
<dbReference type="Reactome" id="R-RNO-159230">
    <property type="pathway name" value="Transport of the SLBP Dependant Mature mRNA"/>
</dbReference>
<dbReference type="Reactome" id="R-RNO-159231">
    <property type="pathway name" value="Transport of Mature mRNA Derived from an Intronless Transcript"/>
</dbReference>
<dbReference type="Reactome" id="R-RNO-159236">
    <property type="pathway name" value="Transport of Mature mRNA derived from an Intron-Containing Transcript"/>
</dbReference>
<dbReference type="Reactome" id="R-RNO-170822">
    <property type="pathway name" value="Regulation of Glucokinase by Glucokinase Regulatory Protein"/>
</dbReference>
<dbReference type="Reactome" id="R-RNO-191859">
    <property type="pathway name" value="snRNP Assembly"/>
</dbReference>
<dbReference type="Reactome" id="R-RNO-3108214">
    <property type="pathway name" value="SUMOylation of DNA damage response and repair proteins"/>
</dbReference>
<dbReference type="Reactome" id="R-RNO-3232142">
    <property type="pathway name" value="SUMOylation of ubiquitinylation proteins"/>
</dbReference>
<dbReference type="Reactome" id="R-RNO-3301854">
    <property type="pathway name" value="Nuclear Pore Complex (NPC) Disassembly"/>
</dbReference>
<dbReference type="Reactome" id="R-RNO-3371453">
    <property type="pathway name" value="Regulation of HSF1-mediated heat shock response"/>
</dbReference>
<dbReference type="Reactome" id="R-RNO-4085377">
    <property type="pathway name" value="SUMOylation of SUMOylation proteins"/>
</dbReference>
<dbReference type="Reactome" id="R-RNO-4551638">
    <property type="pathway name" value="SUMOylation of chromatin organization proteins"/>
</dbReference>
<dbReference type="Reactome" id="R-RNO-4570464">
    <property type="pathway name" value="SUMOylation of RNA binding proteins"/>
</dbReference>
<dbReference type="Reactome" id="R-RNO-4615885">
    <property type="pathway name" value="SUMOylation of DNA replication proteins"/>
</dbReference>
<dbReference type="Reactome" id="R-RNO-5578749">
    <property type="pathway name" value="Transcriptional regulation by small RNAs"/>
</dbReference>
<dbReference type="ChiTaRS" id="Tpr">
    <property type="organism name" value="rat"/>
</dbReference>
<dbReference type="PRO" id="PR:F1MA98"/>
<dbReference type="Proteomes" id="UP000002494">
    <property type="component" value="Chromosome 13"/>
</dbReference>
<dbReference type="Bgee" id="ENSRNOG00000002394">
    <property type="expression patterns" value="Expressed in spleen and 20 other cell types or tissues"/>
</dbReference>
<dbReference type="GO" id="GO:0005737">
    <property type="term" value="C:cytoplasm"/>
    <property type="evidence" value="ECO:0000250"/>
    <property type="project" value="UniProtKB"/>
</dbReference>
<dbReference type="GO" id="GO:0005868">
    <property type="term" value="C:cytoplasmic dynein complex"/>
    <property type="evidence" value="ECO:0000250"/>
    <property type="project" value="UniProtKB"/>
</dbReference>
<dbReference type="GO" id="GO:0000776">
    <property type="term" value="C:kinetochore"/>
    <property type="evidence" value="ECO:0000266"/>
    <property type="project" value="RGD"/>
</dbReference>
<dbReference type="GO" id="GO:0072686">
    <property type="term" value="C:mitotic spindle"/>
    <property type="evidence" value="ECO:0000250"/>
    <property type="project" value="UniProtKB"/>
</dbReference>
<dbReference type="GO" id="GO:0005635">
    <property type="term" value="C:nuclear envelope"/>
    <property type="evidence" value="ECO:0000250"/>
    <property type="project" value="UniProtKB"/>
</dbReference>
<dbReference type="GO" id="GO:0042405">
    <property type="term" value="C:nuclear inclusion body"/>
    <property type="evidence" value="ECO:0000314"/>
    <property type="project" value="UniProtKB"/>
</dbReference>
<dbReference type="GO" id="GO:0031965">
    <property type="term" value="C:nuclear membrane"/>
    <property type="evidence" value="ECO:0000314"/>
    <property type="project" value="UniProtKB"/>
</dbReference>
<dbReference type="GO" id="GO:0034399">
    <property type="term" value="C:nuclear periphery"/>
    <property type="evidence" value="ECO:0000314"/>
    <property type="project" value="UniProtKB"/>
</dbReference>
<dbReference type="GO" id="GO:0005643">
    <property type="term" value="C:nuclear pore"/>
    <property type="evidence" value="ECO:0000250"/>
    <property type="project" value="UniProtKB"/>
</dbReference>
<dbReference type="GO" id="GO:0044615">
    <property type="term" value="C:nuclear pore nuclear basket"/>
    <property type="evidence" value="ECO:0000314"/>
    <property type="project" value="UniProtKB"/>
</dbReference>
<dbReference type="GO" id="GO:0005634">
    <property type="term" value="C:nucleus"/>
    <property type="evidence" value="ECO:0000266"/>
    <property type="project" value="RGD"/>
</dbReference>
<dbReference type="GO" id="GO:0003682">
    <property type="term" value="F:chromatin binding"/>
    <property type="evidence" value="ECO:0000250"/>
    <property type="project" value="UniProtKB"/>
</dbReference>
<dbReference type="GO" id="GO:0070840">
    <property type="term" value="F:dynein complex binding"/>
    <property type="evidence" value="ECO:0000266"/>
    <property type="project" value="RGD"/>
</dbReference>
<dbReference type="GO" id="GO:0031072">
    <property type="term" value="F:heat shock protein binding"/>
    <property type="evidence" value="ECO:0000250"/>
    <property type="project" value="UniProtKB"/>
</dbReference>
<dbReference type="GO" id="GO:0051019">
    <property type="term" value="F:mitogen-activated protein kinase binding"/>
    <property type="evidence" value="ECO:0000250"/>
    <property type="project" value="UniProtKB"/>
</dbReference>
<dbReference type="GO" id="GO:0003729">
    <property type="term" value="F:mRNA binding"/>
    <property type="evidence" value="ECO:0000250"/>
    <property type="project" value="UniProtKB"/>
</dbReference>
<dbReference type="GO" id="GO:0042803">
    <property type="term" value="F:protein homodimerization activity"/>
    <property type="evidence" value="ECO:0000250"/>
    <property type="project" value="UniProtKB"/>
</dbReference>
<dbReference type="GO" id="GO:0017056">
    <property type="term" value="F:structural constituent of nuclear pore"/>
    <property type="evidence" value="ECO:0000250"/>
    <property type="project" value="UniProtKB"/>
</dbReference>
<dbReference type="GO" id="GO:0015631">
    <property type="term" value="F:tubulin binding"/>
    <property type="evidence" value="ECO:0000266"/>
    <property type="project" value="RGD"/>
</dbReference>
<dbReference type="GO" id="GO:0051301">
    <property type="term" value="P:cell division"/>
    <property type="evidence" value="ECO:0007669"/>
    <property type="project" value="UniProtKB-KW"/>
</dbReference>
<dbReference type="GO" id="GO:0034605">
    <property type="term" value="P:cellular response to heat"/>
    <property type="evidence" value="ECO:0000250"/>
    <property type="project" value="UniProtKB"/>
</dbReference>
<dbReference type="GO" id="GO:0035457">
    <property type="term" value="P:cellular response to interferon-alpha"/>
    <property type="evidence" value="ECO:0000250"/>
    <property type="project" value="UniProtKB"/>
</dbReference>
<dbReference type="GO" id="GO:0007094">
    <property type="term" value="P:mitotic spindle assembly checkpoint signaling"/>
    <property type="evidence" value="ECO:0000250"/>
    <property type="project" value="UniProtKB"/>
</dbReference>
<dbReference type="GO" id="GO:0006406">
    <property type="term" value="P:mRNA export from nucleus"/>
    <property type="evidence" value="ECO:0000318"/>
    <property type="project" value="GO_Central"/>
</dbReference>
<dbReference type="GO" id="GO:0031990">
    <property type="term" value="P:mRNA export from nucleus in response to heat stress"/>
    <property type="evidence" value="ECO:0000250"/>
    <property type="project" value="UniProtKB"/>
</dbReference>
<dbReference type="GO" id="GO:0046832">
    <property type="term" value="P:negative regulation of RNA export from nucleus"/>
    <property type="evidence" value="ECO:0000250"/>
    <property type="project" value="UniProtKB"/>
</dbReference>
<dbReference type="GO" id="GO:0000122">
    <property type="term" value="P:negative regulation of transcription by RNA polymerase II"/>
    <property type="evidence" value="ECO:0000250"/>
    <property type="project" value="UniProtKB"/>
</dbReference>
<dbReference type="GO" id="GO:0045947">
    <property type="term" value="P:negative regulation of translational initiation"/>
    <property type="evidence" value="ECO:0000250"/>
    <property type="project" value="UniProtKB"/>
</dbReference>
<dbReference type="GO" id="GO:0006999">
    <property type="term" value="P:nuclear pore organization"/>
    <property type="evidence" value="ECO:0000266"/>
    <property type="project" value="RGD"/>
</dbReference>
<dbReference type="GO" id="GO:0031453">
    <property type="term" value="P:positive regulation of heterochromatin formation"/>
    <property type="evidence" value="ECO:0000250"/>
    <property type="project" value="UniProtKB"/>
</dbReference>
<dbReference type="GO" id="GO:0090316">
    <property type="term" value="P:positive regulation of intracellular protein transport"/>
    <property type="evidence" value="ECO:0000250"/>
    <property type="project" value="UniProtKB"/>
</dbReference>
<dbReference type="GO" id="GO:0090267">
    <property type="term" value="P:positive regulation of mitotic cell cycle spindle assembly checkpoint"/>
    <property type="evidence" value="ECO:0000250"/>
    <property type="project" value="UniProtKB"/>
</dbReference>
<dbReference type="GO" id="GO:0046827">
    <property type="term" value="P:positive regulation of protein export from nucleus"/>
    <property type="evidence" value="ECO:0000315"/>
    <property type="project" value="UniProtKB"/>
</dbReference>
<dbReference type="GO" id="GO:0042307">
    <property type="term" value="P:positive regulation of protein import into nucleus"/>
    <property type="evidence" value="ECO:0000250"/>
    <property type="project" value="UniProtKB"/>
</dbReference>
<dbReference type="GO" id="GO:0006611">
    <property type="term" value="P:protein export from nucleus"/>
    <property type="evidence" value="ECO:0000315"/>
    <property type="project" value="RGD"/>
</dbReference>
<dbReference type="GO" id="GO:0006606">
    <property type="term" value="P:protein import into nucleus"/>
    <property type="evidence" value="ECO:0000266"/>
    <property type="project" value="RGD"/>
</dbReference>
<dbReference type="GO" id="GO:0010965">
    <property type="term" value="P:regulation of mitotic sister chromatid separation"/>
    <property type="evidence" value="ECO:0000250"/>
    <property type="project" value="UniProtKB"/>
</dbReference>
<dbReference type="GO" id="GO:1901673">
    <property type="term" value="P:regulation of mitotic spindle assembly"/>
    <property type="evidence" value="ECO:0000250"/>
    <property type="project" value="UniProtKB"/>
</dbReference>
<dbReference type="GO" id="GO:0032880">
    <property type="term" value="P:regulation of protein localization"/>
    <property type="evidence" value="ECO:0000266"/>
    <property type="project" value="RGD"/>
</dbReference>
<dbReference type="GO" id="GO:0070849">
    <property type="term" value="P:response to epidermal growth factor"/>
    <property type="evidence" value="ECO:0000250"/>
    <property type="project" value="UniProtKB"/>
</dbReference>
<dbReference type="GO" id="GO:0006405">
    <property type="term" value="P:RNA export from nucleus"/>
    <property type="evidence" value="ECO:0000250"/>
    <property type="project" value="UniProtKB"/>
</dbReference>
<dbReference type="GO" id="GO:0006404">
    <property type="term" value="P:RNA import into nucleus"/>
    <property type="evidence" value="ECO:0000250"/>
    <property type="project" value="UniProtKB"/>
</dbReference>
<dbReference type="FunFam" id="1.10.287.1490:FF:000004">
    <property type="entry name" value="nucleoprotein TPR isoform X2"/>
    <property type="match status" value="1"/>
</dbReference>
<dbReference type="FunFam" id="1.10.287.1490:FF:000005">
    <property type="entry name" value="nucleoprotein TPR isoform X2"/>
    <property type="match status" value="1"/>
</dbReference>
<dbReference type="Gene3D" id="1.10.287.1490">
    <property type="match status" value="2"/>
</dbReference>
<dbReference type="InterPro" id="IPR012929">
    <property type="entry name" value="TPR/MLP1"/>
</dbReference>
<dbReference type="PANTHER" id="PTHR18898:SF2">
    <property type="entry name" value="NUCLEOPROTEIN TPR"/>
    <property type="match status" value="1"/>
</dbReference>
<dbReference type="PANTHER" id="PTHR18898">
    <property type="entry name" value="NUCLEOPROTEIN TPR-RELATED"/>
    <property type="match status" value="1"/>
</dbReference>
<dbReference type="Pfam" id="PF25481">
    <property type="entry name" value="Nucleoprot-TPR"/>
    <property type="match status" value="1"/>
</dbReference>
<dbReference type="Pfam" id="PF07926">
    <property type="entry name" value="TPR_MLP1_2"/>
    <property type="match status" value="1"/>
</dbReference>
<reference key="1">
    <citation type="journal article" date="2004" name="Nature">
        <title>Genome sequence of the Brown Norway rat yields insights into mammalian evolution.</title>
        <authorList>
            <person name="Gibbs R.A."/>
            <person name="Weinstock G.M."/>
            <person name="Metzker M.L."/>
            <person name="Muzny D.M."/>
            <person name="Sodergren E.J."/>
            <person name="Scherer S."/>
            <person name="Scott G."/>
            <person name="Steffen D."/>
            <person name="Worley K.C."/>
            <person name="Burch P.E."/>
            <person name="Okwuonu G."/>
            <person name="Hines S."/>
            <person name="Lewis L."/>
            <person name="Deramo C."/>
            <person name="Delgado O."/>
            <person name="Dugan-Rocha S."/>
            <person name="Miner G."/>
            <person name="Morgan M."/>
            <person name="Hawes A."/>
            <person name="Gill R."/>
            <person name="Holt R.A."/>
            <person name="Adams M.D."/>
            <person name="Amanatides P.G."/>
            <person name="Baden-Tillson H."/>
            <person name="Barnstead M."/>
            <person name="Chin S."/>
            <person name="Evans C.A."/>
            <person name="Ferriera S."/>
            <person name="Fosler C."/>
            <person name="Glodek A."/>
            <person name="Gu Z."/>
            <person name="Jennings D."/>
            <person name="Kraft C.L."/>
            <person name="Nguyen T."/>
            <person name="Pfannkoch C.M."/>
            <person name="Sitter C."/>
            <person name="Sutton G.G."/>
            <person name="Venter J.C."/>
            <person name="Woodage T."/>
            <person name="Smith D."/>
            <person name="Lee H.-M."/>
            <person name="Gustafson E."/>
            <person name="Cahill P."/>
            <person name="Kana A."/>
            <person name="Doucette-Stamm L."/>
            <person name="Weinstock K."/>
            <person name="Fechtel K."/>
            <person name="Weiss R.B."/>
            <person name="Dunn D.M."/>
            <person name="Green E.D."/>
            <person name="Blakesley R.W."/>
            <person name="Bouffard G.G."/>
            <person name="De Jong P.J."/>
            <person name="Osoegawa K."/>
            <person name="Zhu B."/>
            <person name="Marra M."/>
            <person name="Schein J."/>
            <person name="Bosdet I."/>
            <person name="Fjell C."/>
            <person name="Jones S."/>
            <person name="Krzywinski M."/>
            <person name="Mathewson C."/>
            <person name="Siddiqui A."/>
            <person name="Wye N."/>
            <person name="McPherson J."/>
            <person name="Zhao S."/>
            <person name="Fraser C.M."/>
            <person name="Shetty J."/>
            <person name="Shatsman S."/>
            <person name="Geer K."/>
            <person name="Chen Y."/>
            <person name="Abramzon S."/>
            <person name="Nierman W.C."/>
            <person name="Havlak P.H."/>
            <person name="Chen R."/>
            <person name="Durbin K.J."/>
            <person name="Egan A."/>
            <person name="Ren Y."/>
            <person name="Song X.-Z."/>
            <person name="Li B."/>
            <person name="Liu Y."/>
            <person name="Qin X."/>
            <person name="Cawley S."/>
            <person name="Cooney A.J."/>
            <person name="D'Souza L.M."/>
            <person name="Martin K."/>
            <person name="Wu J.Q."/>
            <person name="Gonzalez-Garay M.L."/>
            <person name="Jackson A.R."/>
            <person name="Kalafus K.J."/>
            <person name="McLeod M.P."/>
            <person name="Milosavljevic A."/>
            <person name="Virk D."/>
            <person name="Volkov A."/>
            <person name="Wheeler D.A."/>
            <person name="Zhang Z."/>
            <person name="Bailey J.A."/>
            <person name="Eichler E.E."/>
            <person name="Tuzun E."/>
            <person name="Birney E."/>
            <person name="Mongin E."/>
            <person name="Ureta-Vidal A."/>
            <person name="Woodwark C."/>
            <person name="Zdobnov E."/>
            <person name="Bork P."/>
            <person name="Suyama M."/>
            <person name="Torrents D."/>
            <person name="Alexandersson M."/>
            <person name="Trask B.J."/>
            <person name="Young J.M."/>
            <person name="Huang H."/>
            <person name="Wang H."/>
            <person name="Xing H."/>
            <person name="Daniels S."/>
            <person name="Gietzen D."/>
            <person name="Schmidt J."/>
            <person name="Stevens K."/>
            <person name="Vitt U."/>
            <person name="Wingrove J."/>
            <person name="Camara F."/>
            <person name="Mar Alba M."/>
            <person name="Abril J.F."/>
            <person name="Guigo R."/>
            <person name="Smit A."/>
            <person name="Dubchak I."/>
            <person name="Rubin E.M."/>
            <person name="Couronne O."/>
            <person name="Poliakov A."/>
            <person name="Huebner N."/>
            <person name="Ganten D."/>
            <person name="Goesele C."/>
            <person name="Hummel O."/>
            <person name="Kreitler T."/>
            <person name="Lee Y.-A."/>
            <person name="Monti J."/>
            <person name="Schulz H."/>
            <person name="Zimdahl H."/>
            <person name="Himmelbauer H."/>
            <person name="Lehrach H."/>
            <person name="Jacob H.J."/>
            <person name="Bromberg S."/>
            <person name="Gullings-Handley J."/>
            <person name="Jensen-Seaman M.I."/>
            <person name="Kwitek A.E."/>
            <person name="Lazar J."/>
            <person name="Pasko D."/>
            <person name="Tonellato P.J."/>
            <person name="Twigger S."/>
            <person name="Ponting C.P."/>
            <person name="Duarte J.M."/>
            <person name="Rice S."/>
            <person name="Goodstadt L."/>
            <person name="Beatson S.A."/>
            <person name="Emes R.D."/>
            <person name="Winter E.E."/>
            <person name="Webber C."/>
            <person name="Brandt P."/>
            <person name="Nyakatura G."/>
            <person name="Adetobi M."/>
            <person name="Chiaromonte F."/>
            <person name="Elnitski L."/>
            <person name="Eswara P."/>
            <person name="Hardison R.C."/>
            <person name="Hou M."/>
            <person name="Kolbe D."/>
            <person name="Makova K."/>
            <person name="Miller W."/>
            <person name="Nekrutenko A."/>
            <person name="Riemer C."/>
            <person name="Schwartz S."/>
            <person name="Taylor J."/>
            <person name="Yang S."/>
            <person name="Zhang Y."/>
            <person name="Lindpaintner K."/>
            <person name="Andrews T.D."/>
            <person name="Caccamo M."/>
            <person name="Clamp M."/>
            <person name="Clarke L."/>
            <person name="Curwen V."/>
            <person name="Durbin R.M."/>
            <person name="Eyras E."/>
            <person name="Searle S.M."/>
            <person name="Cooper G.M."/>
            <person name="Batzoglou S."/>
            <person name="Brudno M."/>
            <person name="Sidow A."/>
            <person name="Stone E.A."/>
            <person name="Payseur B.A."/>
            <person name="Bourque G."/>
            <person name="Lopez-Otin C."/>
            <person name="Puente X.S."/>
            <person name="Chakrabarti K."/>
            <person name="Chatterji S."/>
            <person name="Dewey C."/>
            <person name="Pachter L."/>
            <person name="Bray N."/>
            <person name="Yap V.B."/>
            <person name="Caspi A."/>
            <person name="Tesler G."/>
            <person name="Pevzner P.A."/>
            <person name="Haussler D."/>
            <person name="Roskin K.M."/>
            <person name="Baertsch R."/>
            <person name="Clawson H."/>
            <person name="Furey T.S."/>
            <person name="Hinrichs A.S."/>
            <person name="Karolchik D."/>
            <person name="Kent W.J."/>
            <person name="Rosenbloom K.R."/>
            <person name="Trumbower H."/>
            <person name="Weirauch M."/>
            <person name="Cooper D.N."/>
            <person name="Stenson P.D."/>
            <person name="Ma B."/>
            <person name="Brent M."/>
            <person name="Arumugam M."/>
            <person name="Shteynberg D."/>
            <person name="Copley R.R."/>
            <person name="Taylor M.S."/>
            <person name="Riethman H."/>
            <person name="Mudunuri U."/>
            <person name="Peterson J."/>
            <person name="Guyer M."/>
            <person name="Felsenfeld A."/>
            <person name="Old S."/>
            <person name="Mockrin S."/>
            <person name="Collins F.S."/>
        </authorList>
    </citation>
    <scope>NUCLEOTIDE SEQUENCE [LARGE SCALE GENOMIC DNA]</scope>
    <source>
        <strain>Brown Norway</strain>
    </source>
</reference>
<reference key="2">
    <citation type="journal article" date="2004" name="Genome Res.">
        <title>The status, quality, and expansion of the NIH full-length cDNA project: the Mammalian Gene Collection (MGC).</title>
        <authorList>
            <consortium name="The MGC Project Team"/>
        </authorList>
    </citation>
    <scope>NUCLEOTIDE SEQUENCE [LARGE SCALE MRNA] OF 1-340</scope>
    <source>
        <tissue>Prostate</tissue>
    </source>
</reference>
<reference key="3">
    <citation type="journal article" date="2002" name="J. Cell Biol.">
        <title>Tpr is localized within the nuclear basket of the pore complex and has a role in nuclear protein export.</title>
        <authorList>
            <person name="Frosst P."/>
            <person name="Guan T."/>
            <person name="Subauste C."/>
            <person name="Hahn K."/>
            <person name="Gerace L."/>
        </authorList>
    </citation>
    <scope>FUNCTION IN NUCLEAR PROTEIN EXPORT</scope>
    <scope>SUBCELLULAR LOCATION</scope>
</reference>
<reference key="4">
    <citation type="journal article" date="2012" name="Nat. Commun.">
        <title>Quantitative maps of protein phosphorylation sites across 14 different rat organs and tissues.</title>
        <authorList>
            <person name="Lundby A."/>
            <person name="Secher A."/>
            <person name="Lage K."/>
            <person name="Nordsborg N.B."/>
            <person name="Dmytriyev A."/>
            <person name="Lundby C."/>
            <person name="Olsen J.V."/>
        </authorList>
    </citation>
    <scope>PHOSPHORYLATION [LARGE SCALE ANALYSIS] AT SER-379; SER-1180 AND SER-2152</scope>
    <scope>IDENTIFICATION BY MASS SPECTROMETRY [LARGE SCALE ANALYSIS]</scope>
</reference>
<feature type="initiator methionine" description="Removed" evidence="3">
    <location>
        <position position="1"/>
    </location>
</feature>
<feature type="chain" id="PRO_0000422101" description="Nucleoprotein TPR">
    <location>
        <begin position="2"/>
        <end position="2360"/>
    </location>
</feature>
<feature type="region of interest" description="Sufficient for interaction with TPR" evidence="1">
    <location>
        <begin position="3"/>
        <end position="13"/>
    </location>
</feature>
<feature type="region of interest" description="Necessary for interaction with HSF1" evidence="1">
    <location>
        <begin position="14"/>
        <end position="117"/>
    </location>
</feature>
<feature type="region of interest" description="Necessary for association to the NPC" evidence="1">
    <location>
        <begin position="437"/>
        <end position="513"/>
    </location>
</feature>
<feature type="region of interest" description="Disordered" evidence="5">
    <location>
        <begin position="915"/>
        <end position="939"/>
    </location>
</feature>
<feature type="region of interest" description="Necessary for interaction with HSF1" evidence="1">
    <location>
        <begin position="1218"/>
        <end position="1320"/>
    </location>
</feature>
<feature type="region of interest" description="Disordered" evidence="5">
    <location>
        <begin position="1479"/>
        <end position="1520"/>
    </location>
</feature>
<feature type="region of interest" description="Disordered" evidence="5">
    <location>
        <begin position="1618"/>
        <end position="1673"/>
    </location>
</feature>
<feature type="region of interest" description="Disordered" evidence="5">
    <location>
        <begin position="1801"/>
        <end position="2122"/>
    </location>
</feature>
<feature type="region of interest" description="Sufficient and essential for mediating its nuclear import" evidence="1">
    <location>
        <begin position="1811"/>
        <end position="1866"/>
    </location>
</feature>
<feature type="region of interest" description="Disordered" evidence="5">
    <location>
        <begin position="2224"/>
        <end position="2360"/>
    </location>
</feature>
<feature type="coiled-coil region" evidence="4">
    <location>
        <begin position="24"/>
        <end position="370"/>
    </location>
</feature>
<feature type="coiled-coil region" evidence="4">
    <location>
        <begin position="423"/>
        <end position="603"/>
    </location>
</feature>
<feature type="coiled-coil region" evidence="4">
    <location>
        <begin position="664"/>
        <end position="1172"/>
    </location>
</feature>
<feature type="coiled-coil region" evidence="4">
    <location>
        <begin position="1215"/>
        <end position="1420"/>
    </location>
</feature>
<feature type="coiled-coil region" evidence="4">
    <location>
        <begin position="1472"/>
        <end position="1629"/>
    </location>
</feature>
<feature type="compositionally biased region" description="Polar residues" evidence="5">
    <location>
        <begin position="915"/>
        <end position="924"/>
    </location>
</feature>
<feature type="compositionally biased region" description="Basic and acidic residues" evidence="5">
    <location>
        <begin position="928"/>
        <end position="939"/>
    </location>
</feature>
<feature type="compositionally biased region" description="Basic and acidic residues" evidence="5">
    <location>
        <begin position="1503"/>
        <end position="1512"/>
    </location>
</feature>
<feature type="compositionally biased region" description="Basic and acidic residues" evidence="5">
    <location>
        <begin position="1618"/>
        <end position="1630"/>
    </location>
</feature>
<feature type="compositionally biased region" description="Polar residues" evidence="5">
    <location>
        <begin position="1632"/>
        <end position="1651"/>
    </location>
</feature>
<feature type="compositionally biased region" description="Polar residues" evidence="5">
    <location>
        <begin position="1801"/>
        <end position="1826"/>
    </location>
</feature>
<feature type="compositionally biased region" description="Acidic residues" evidence="5">
    <location>
        <begin position="1866"/>
        <end position="1880"/>
    </location>
</feature>
<feature type="compositionally biased region" description="Polar residues" evidence="5">
    <location>
        <begin position="1881"/>
        <end position="1892"/>
    </location>
</feature>
<feature type="compositionally biased region" description="Low complexity" evidence="5">
    <location>
        <begin position="1923"/>
        <end position="1934"/>
    </location>
</feature>
<feature type="compositionally biased region" description="Acidic residues" evidence="5">
    <location>
        <begin position="1945"/>
        <end position="1986"/>
    </location>
</feature>
<feature type="compositionally biased region" description="Acidic residues" evidence="5">
    <location>
        <begin position="1996"/>
        <end position="2017"/>
    </location>
</feature>
<feature type="compositionally biased region" description="Polar residues" evidence="5">
    <location>
        <begin position="2023"/>
        <end position="2061"/>
    </location>
</feature>
<feature type="compositionally biased region" description="Polar residues" evidence="5">
    <location>
        <begin position="2224"/>
        <end position="2241"/>
    </location>
</feature>
<feature type="compositionally biased region" description="Low complexity" evidence="5">
    <location>
        <begin position="2242"/>
        <end position="2254"/>
    </location>
</feature>
<feature type="compositionally biased region" description="Acidic residues" evidence="5">
    <location>
        <begin position="2256"/>
        <end position="2269"/>
    </location>
</feature>
<feature type="compositionally biased region" description="Acidic residues" evidence="5">
    <location>
        <begin position="2282"/>
        <end position="2296"/>
    </location>
</feature>
<feature type="compositionally biased region" description="Low complexity" evidence="5">
    <location>
        <begin position="2297"/>
        <end position="2317"/>
    </location>
</feature>
<feature type="compositionally biased region" description="Gly residues" evidence="5">
    <location>
        <begin position="2349"/>
        <end position="2360"/>
    </location>
</feature>
<feature type="modified residue" description="N-acetylalanine" evidence="3">
    <location>
        <position position="2"/>
    </location>
</feature>
<feature type="modified residue" description="N6-acetyllysine" evidence="3">
    <location>
        <position position="252"/>
    </location>
</feature>
<feature type="modified residue" description="N6-acetyllysine" evidence="3">
    <location>
        <position position="312"/>
    </location>
</feature>
<feature type="modified residue" description="N6-acetyllysine" evidence="3">
    <location>
        <position position="345"/>
    </location>
</feature>
<feature type="modified residue" description="Phosphoserine" evidence="9">
    <location>
        <position position="379"/>
    </location>
</feature>
<feature type="modified residue" description="N6-acetyllysine" evidence="3">
    <location>
        <position position="428"/>
    </location>
</feature>
<feature type="modified residue" description="N6-acetyllysine" evidence="3">
    <location>
        <position position="457"/>
    </location>
</feature>
<feature type="modified residue" description="N6-acetyllysine" evidence="2">
    <location>
        <position position="477"/>
    </location>
</feature>
<feature type="modified residue" description="Phosphoserine" evidence="3">
    <location>
        <position position="522"/>
    </location>
</feature>
<feature type="modified residue" description="Phosphoserine" evidence="3">
    <location>
        <position position="523"/>
    </location>
</feature>
<feature type="modified residue" description="Phosphoserine" evidence="3">
    <location>
        <position position="632"/>
    </location>
</feature>
<feature type="modified residue" description="N6-acetyllysine" evidence="3">
    <location>
        <position position="713"/>
    </location>
</feature>
<feature type="modified residue" description="N6-acetyllysine" evidence="3">
    <location>
        <position position="723"/>
    </location>
</feature>
<feature type="modified residue" description="N6-acetyllysine" evidence="3">
    <location>
        <position position="748"/>
    </location>
</feature>
<feature type="modified residue" description="N6-acetyllysine" evidence="3">
    <location>
        <position position="755"/>
    </location>
</feature>
<feature type="modified residue" description="Phosphoserine" evidence="9">
    <location>
        <position position="1180"/>
    </location>
</feature>
<feature type="modified residue" description="Phosphoserine" evidence="3">
    <location>
        <position position="1185"/>
    </location>
</feature>
<feature type="modified residue" description="N6-acetyllysine" evidence="2">
    <location>
        <position position="1689"/>
    </location>
</feature>
<feature type="modified residue" description="Phosphothreonine" evidence="3">
    <location>
        <position position="1691"/>
    </location>
</feature>
<feature type="modified residue" description="Phosphoserine" evidence="3">
    <location>
        <position position="1892"/>
    </location>
</feature>
<feature type="modified residue" description="Phosphoserine" evidence="3">
    <location>
        <position position="2031"/>
    </location>
</feature>
<feature type="modified residue" description="Phosphoserine" evidence="3">
    <location>
        <position position="2034"/>
    </location>
</feature>
<feature type="modified residue" description="Phosphoserine" evidence="3">
    <location>
        <position position="2045"/>
    </location>
</feature>
<feature type="modified residue" description="Phosphoserine" evidence="3">
    <location>
        <position position="2047"/>
    </location>
</feature>
<feature type="modified residue" description="Phosphoserine" evidence="3">
    <location>
        <position position="2070"/>
    </location>
</feature>
<feature type="modified residue" description="Omega-N-methylarginine" evidence="2">
    <location>
        <position position="2103"/>
    </location>
</feature>
<feature type="modified residue" description="Omega-N-methylarginine" evidence="3">
    <location>
        <position position="2108"/>
    </location>
</feature>
<feature type="modified residue" description="Phosphothreonine" evidence="2">
    <location>
        <position position="2113"/>
    </location>
</feature>
<feature type="modified residue" description="Phosphothreonine" evidence="3">
    <location>
        <position position="2134"/>
    </location>
</feature>
<feature type="modified residue" description="Phosphoserine" evidence="9">
    <location>
        <position position="2152"/>
    </location>
</feature>
<feature type="modified residue" description="Omega-N-methylarginine" evidence="2">
    <location>
        <position position="2160"/>
    </location>
</feature>
<feature type="modified residue" description="Asymmetric dimethylarginine" evidence="2">
    <location>
        <position position="2340"/>
    </location>
</feature>
<feature type="modified residue" description="Asymmetric dimethylarginine" evidence="2">
    <location>
        <position position="2342"/>
    </location>
</feature>
<feature type="modified residue" description="Asymmetric dimethylarginine" evidence="2">
    <location>
        <position position="2351"/>
    </location>
</feature>
<evidence type="ECO:0000250" key="1"/>
<evidence type="ECO:0000250" key="2">
    <source>
        <dbReference type="UniProtKB" id="F6ZDS4"/>
    </source>
</evidence>
<evidence type="ECO:0000250" key="3">
    <source>
        <dbReference type="UniProtKB" id="P12270"/>
    </source>
</evidence>
<evidence type="ECO:0000255" key="4"/>
<evidence type="ECO:0000256" key="5">
    <source>
        <dbReference type="SAM" id="MobiDB-lite"/>
    </source>
</evidence>
<evidence type="ECO:0000269" key="6">
    <source>
    </source>
</evidence>
<evidence type="ECO:0000305" key="7"/>
<evidence type="ECO:0000312" key="8">
    <source>
        <dbReference type="RGD" id="1310664"/>
    </source>
</evidence>
<evidence type="ECO:0007744" key="9">
    <source>
    </source>
</evidence>
<accession>F1MA98</accession>
<accession>Q3T1J7</accession>
<organism>
    <name type="scientific">Rattus norvegicus</name>
    <name type="common">Rat</name>
    <dbReference type="NCBI Taxonomy" id="10116"/>
    <lineage>
        <taxon>Eukaryota</taxon>
        <taxon>Metazoa</taxon>
        <taxon>Chordata</taxon>
        <taxon>Craniata</taxon>
        <taxon>Vertebrata</taxon>
        <taxon>Euteleostomi</taxon>
        <taxon>Mammalia</taxon>
        <taxon>Eutheria</taxon>
        <taxon>Euarchontoglires</taxon>
        <taxon>Glires</taxon>
        <taxon>Rodentia</taxon>
        <taxon>Myomorpha</taxon>
        <taxon>Muroidea</taxon>
        <taxon>Muridae</taxon>
        <taxon>Murinae</taxon>
        <taxon>Rattus</taxon>
    </lineage>
</organism>
<gene>
    <name evidence="8" type="primary">Tpr</name>
</gene>
<protein>
    <recommendedName>
        <fullName evidence="7">Nucleoprotein TPR</fullName>
    </recommendedName>
    <alternativeName>
        <fullName>Megator</fullName>
    </alternativeName>
    <alternativeName>
        <fullName>NPC-associated intranuclear protein</fullName>
    </alternativeName>
    <alternativeName>
        <fullName>Translocated promoter region protein</fullName>
    </alternativeName>
</protein>
<sequence length="2360" mass="267306">MAAVLQQVLERPELNKLPKSTQNKLEKFLAEQQSEIDCLKGRHEKFKVESEQQYFEIEKRLSQSQERLVNETRECQNLRLELEKLNNQVKVLTEKNKELETAQDRNLGIQSQFTRAKEELEAEKRDLIRTNERLSQEVEYLTEDVKRLNEKLKESNTTKGELQLKLDELQASDVTVKYREKRLEQEKELLHNQNSWLNTELKTKTDELLALGREKGNEILELKCTLENKKEEVLRLEEQMNGLKTSNEHLQKHVEDLLTKLKEAKEQQASMEEKFHNELNAHIKLSNLYKSAADDSEAKSNELTRAVDELHKLLKEAGEANKTIQDHLLQVEESKDQMEKEMLEKIGKLEKELENANDLLSATKRKGAILSEEELAAMSPTAAAVAKIVKPGMKLTELYNAYVETQDQLLLEKLENKRINKYLDEIVKEVEAKAPILKRQREEYERAQKAVASLSAKLEQAMKEIQRLQEDTDKANKHSSVLERDNQRMEIQIKDLSQQIRVLLMELEEARGNHVIRDEEVSSADISSSSEVISQHLVSYRNIEELQQQNQRLLFALRELGETREREEQETTSSKIAELQNKLENSLTELEQLRESRQHQMQLVDSIVRQRDMYRILLSQTTGMAIPLQASSLDDISLVSTPKRSSTSQTVSTPAPEPIIESTETIEAKAALKQLQEIFENYKKEKMDSEKLQNEQLEKLQEQVTDLRSQNTKISTQLDFASKRYEMLQDNVEGYRREITSLQERNQKLTATTQKQEQIINTMTQDLRGANEKLAVAEVRAENLKKEKEMLKLSEVRLSQQRESLLAEQRGQNLLLTNLQTIQGILERSETETKQRLSSQIEKLEHEISHLKKKLENEVEQRHTLTRNLDVQLLDTKRQLDTEINLHLNTKELLKNAQKDIATLKQHLNNMEAQLASQSTQRTGKGQPGDRDDVDDLKSQLRQAEEQVNDLKERLKTSASNVEQYRAMVTSLEDSLNKEKQVTEEVHKNIEVRLKESAEFQTQLEKKLMEVEKEKQELQDDKRKAIESMEQQLTELKKTLSSVQSEVQEALQRASTALSNEQQARRDCQEQAKIAVEAQNKYERELMLHAADVEALQAAKEQVSKMASVRQHLEETTQKAESQLLECKASWEERERVLKDEVSKSVSRCEDLEKQNRLLHDQIEKLSDKVVTSMKEVVQSPLNISLNEEGKSQEQILEILRFIRREKEIAETRFEVAQVESLRYRQRVELLERELQELQDSLNAEREKVQVTAKTMAQHEELMKKTETMNVVMETNKMLREEKERLEQNLQQMQAKVRKLELDILPLQEANAELSEKSGMLQAEKKLLEEDVKRWKARNQHLINQQKDPDTEEYRKLLSEKEIHTKRIQQLNEEVGRLKAEIARSNASLTNNQNLIQSLKEDLSKVRTEKESIQKDLDAKIIDIQEKVKTITQVKKIGRRYKTQFEELKAQQKAMETSTQSSGDHQEQHISVQEMQELKDNLSQSETKTKSLEGQVENLQKTLSEKETEARSLQEQTAQLQSELSRLRQELQDKTTKEEQLRQQMNEKDEKTWKAITVARSKIAHLSGVKDQLTKENEELKQRNGALDQQKDELDVRMTALKSQYEGRISRLERELREHQERHLEQRDEPQEPTNKAPEQQRQITLKTTPASGERGIASTSDPPTANIKPTPVVSTPSKVTAAAMAGNKSTPRASIRPMVTPATVTNPTTTPTATVMPTTQVESQEAMQSEGPVEHVPVFGSTSGSVRSTSPNVQPSISQPLLTVQQQTQATAFVQPTQQSHPQIEPANQELSPNIVEVVQSSPVERPSTSTAVFGTVSATPSSSLPKRAREEEEDSTIEAGDQVSDDTVEMPLPKKLKTVTPVGTEEEVMAEESTDGEAETQTYNQDSQDSIGEGVTQGDYTPMEDSEETSQSLQIDLGPLQSDQQTTSSQDGQGKGDDVIVIDSDDEDDDEENDGEHEDYEEDEDEDDDEEDDTGMGDEGEDSNEGTGSADGNDGYEADDAEGGDGTDPGTETEESMGGAESNQRAADSQNSGEGNTSAAESSFSQEVAREQQPTSASERQTPQAPQSPRRPPHPLPPRLTIHAPPQELGPPVQRIQMTRRQSVGRGLQLTPGIGGMQQHFFDDEDRTVPSTPTLVVPHRTDGFAEAIHSPQVAGVPRFRFGPPEDMPQTSSSHSDLGQLASQGGLGMYETPLFLAHEEESGGRSVPTTPLQVAAPVTVFTESTTSDASEHASQSVPMVTTSTGTLSTTNETPAGDDGDEVFVETESEGISSEAGLEIDSQQEEEPVQASDESDLPSTSQDPPSSSSVDTSSSQPKPFRRVRLQTTLRQGVRGRQFNRQRGISHAMGGRGGINRGNIN</sequence>
<comment type="function">
    <text evidence="1 6">Component of the nuclear pore complex (NPC), a complex required for the trafficking across the nuclear envelope. Functions as a scaffolding element in the nuclear phase of the NPC essential for normal nucleocytoplasmic transport of proteins and mRNAs, plays a role in the establishment of nuclear-peripheral chromatin compartmentalization in interphase, and in the mitotic spindle checkpoint signaling during mitosis. Involved in the quality control and retention of unspliced mRNAs in the nucleus; in association with NUP153, regulates the nuclear export of unspliced mRNA species bearing constitutive transport element (CTE) in a NXF1- and KHDRBS1-independent manner. Negatively regulates both the association of CTE-containing mRNA with large polyribosomes and translation initiation. Does not play any role in Rev response element (RRE)-mediated export of unspliced mRNAs. Implicated in nuclear export of mRNAs transcribed from heat shock gene promoters; associates both with chromatin in the HSP70 promoter and with mRNAs transcribed from this promoter under stress-induced conditions. Modulates the nucleocytoplasmic transport of activated MAPK1/ERK2 and huntingtin/HTT and may serve as a docking site for the XPO1/CRM1-mediated nuclear export complex. Also plays a role as a structural and functional element of the perinuclear chromatin distribution; involved in the formation and/or maintenance of NPC-associated perinuclear heterochromatin exclusion zones (HEZs). Finally, acts as a spatial regulator of the spindle-assembly checkpoint (SAC) response ensuring a timely and effective recruitment of spindle checkpoint proteins like MAD1L1 and MAD2L1 to unattached kinetochore during the metaphase-anaphase transition before chromosome congression. Its N-terminus is involved in activation of oncogenic kinases (By similarity). Plays a role in the regulation of nuclear protein export.</text>
</comment>
<comment type="subunit">
    <text evidence="1 3">Homodimer. Part of the nuclear pore complex (NPC). Associates with the XPO1/CRM1-mediated nuclear export complex, the Importin alpha/Importin beta receptor and the dynein 1 complex. Interacts (via C-terminal domain) with the KPNB1; the interaction occurs in a RanGTP-dependent manner. Interacts (via C-terminal region and phosphorylated form) with MAPK1/ERK2 (via phosphorylated form); the interaction requires dimerization of MAPK1/ERK2 and increases following EGF stimulation. Interacts with MAPK3/ERK1; the interaction increases following EGF stimulation. Interacts (via coiled coil region) with NUP153; the interaction is direct. Interacts with HSF1; the interaction increases in a stress-responsive manner and stimulates export of stress-induced HSP70 mRNA. Interacts with huntingtin/HTT; the interaction is inhibited by aggregated huntingtin/HTT forms with expanded polyglutamine stretch. Interacts with MAD1L1 (via N-terminal region), MAD2L1, and TTK; the interactions occurs in a microtubule-independent manner. Interacts (via middle region) with DYNLL1. Interacts with DCTN1, dynein, NUP153 and tubulin. Interacts with IFI204 (via C-terminal region). Interacts with IFI203. Interacts with MTA1 (By similarity). Interacts with ZC3HC1; this interaction mediates ZC3HC1 nuclear envelopes (NE)-association but also required for proper positioning of a substantial amount of TPR at the nuclear basket (NB) (By similarity).</text>
</comment>
<comment type="subcellular location">
    <subcellularLocation>
        <location evidence="3">Nucleus</location>
    </subcellularLocation>
    <subcellularLocation>
        <location evidence="3">Nucleus membrane</location>
        <topology evidence="3">Peripheral membrane protein</topology>
        <orientation evidence="3">Nucleoplasmic side</orientation>
    </subcellularLocation>
    <subcellularLocation>
        <location evidence="3">Nucleus envelope</location>
    </subcellularLocation>
    <subcellularLocation>
        <location evidence="6">Nucleus</location>
        <location evidence="6">Nuclear pore complex</location>
    </subcellularLocation>
    <subcellularLocation>
        <location evidence="3">Cytoplasm</location>
    </subcellularLocation>
    <subcellularLocation>
        <location evidence="3">Cytoplasm</location>
        <location evidence="3">Cytoskeleton</location>
        <location evidence="3">Spindle</location>
    </subcellularLocation>
    <subcellularLocation>
        <location evidence="3">Chromosome</location>
        <location evidence="3">Centromere</location>
        <location evidence="3">Kinetochore</location>
    </subcellularLocation>
    <subcellularLocation>
        <location evidence="3">Nucleus membrane</location>
        <topology evidence="3">Peripheral membrane protein</topology>
        <orientation evidence="3">Cytoplasmic side</orientation>
    </subcellularLocation>
    <text evidence="1 3">Detected as discrete intranuclear foci with IFI204 (By similarity). In interphase, localizes to the nucleoplasmic side of the nuclear pore complex (NPC) core structure, forming a fibrous structure called the nuclear basket. Detected exclusively to the cytoplasmic margin of NPC (By similarity). Docking to the inner nucleoplasmic side of the NPC is mediated through binding to nucleoporins. Anchored by NUP153 to the NPC. The assembly of the NPC is a stepwise process in which Trp-containing peripheral structures assemble after other components, including p62. Detected as filaments that emanate from the nuclear basket of the NPC and extend to the nucleolus to delineate a chromatin-free network extending from the nuclear envelope to the perinucleolar region. Detected in diffuse and discrete spheroidal intranuclear foci. Nucleocytoplasmic shuttling protein imported into the nucleus in a XPO1/CRM1- and Importin alpha/Importin beta receptor-dependent manner. Remains localized to the nuclear membrane after poliovirus (PV) infection. During mitosis, remains associated with the nuclear envelope until prometaphase. Associated with the mitotic spindle from late prometaphase until anaphase. Reorganized during mitosis in a viscous and dynamic nuclear-derived spindle matrix that embeds the microtubule spindle apparatus from pole to pole in a microtubule-independent manner. Recruited to the reforming nuclear envelope during telophase and cytokinesis. Detected at kinetochores during prometaphase. Colocalizes with MAD2L1 in the spindle matrix but not at kinetochore. Colocalizes with dynein, dynactin, tubulin at kinetochore during the metaphase-anaphase transition. Colocalizes with DYNLL1 at the mitotic spindle (By similarity).</text>
</comment>
<comment type="domain">
    <text evidence="1">The N-terminal domain mediates intranuclear attachment to the nuclear pore complex. The C-terminal domain mediates its nuclear import (By similarity).</text>
</comment>
<comment type="PTM">
    <text evidence="1">Phosphorylated. Phosphorylation occurs on serine and threonine residues (comprised in the C-terminal region) by MAPK1/ERK2 and stabilizes the interaction between these two proteins (By similarity).</text>
</comment>
<comment type="similarity">
    <text evidence="7">Belongs to the TPR family.</text>
</comment>
<comment type="sequence caution" evidence="7">
    <conflict type="miscellaneous discrepancy">
        <sequence resource="EMBL-CDS" id="AAI01884"/>
    </conflict>
    <text>Contaminating sequence. Potential poly-A sequence.</text>
</comment>
<keyword id="KW-0007">Acetylation</keyword>
<keyword id="KW-0131">Cell cycle</keyword>
<keyword id="KW-0132">Cell division</keyword>
<keyword id="KW-0137">Centromere</keyword>
<keyword id="KW-0158">Chromosome</keyword>
<keyword id="KW-0175">Coiled coil</keyword>
<keyword id="KW-0963">Cytoplasm</keyword>
<keyword id="KW-0206">Cytoskeleton</keyword>
<keyword id="KW-0995">Kinetochore</keyword>
<keyword id="KW-0472">Membrane</keyword>
<keyword id="KW-0488">Methylation</keyword>
<keyword id="KW-0498">Mitosis</keyword>
<keyword id="KW-0509">mRNA transport</keyword>
<keyword id="KW-0906">Nuclear pore complex</keyword>
<keyword id="KW-0539">Nucleus</keyword>
<keyword id="KW-0597">Phosphoprotein</keyword>
<keyword id="KW-0653">Protein transport</keyword>
<keyword id="KW-0656">Proto-oncogene</keyword>
<keyword id="KW-1185">Reference proteome</keyword>
<keyword id="KW-0811">Translocation</keyword>
<keyword id="KW-0813">Transport</keyword>
<proteinExistence type="evidence at protein level"/>